<dbReference type="EC" id="2.3.1.46" evidence="1"/>
<dbReference type="EMBL" id="CP000606">
    <property type="protein sequence ID" value="ABO24417.1"/>
    <property type="molecule type" value="Genomic_DNA"/>
</dbReference>
<dbReference type="RefSeq" id="WP_011866348.1">
    <property type="nucleotide sequence ID" value="NC_009092.1"/>
</dbReference>
<dbReference type="SMR" id="A3QG19"/>
<dbReference type="STRING" id="323850.Shew_2551"/>
<dbReference type="KEGG" id="slo:Shew_2551"/>
<dbReference type="eggNOG" id="COG1897">
    <property type="taxonomic scope" value="Bacteria"/>
</dbReference>
<dbReference type="HOGENOM" id="CLU_057851_0_1_6"/>
<dbReference type="OrthoDB" id="9772423at2"/>
<dbReference type="UniPathway" id="UPA00051">
    <property type="reaction ID" value="UER00075"/>
</dbReference>
<dbReference type="Proteomes" id="UP000001558">
    <property type="component" value="Chromosome"/>
</dbReference>
<dbReference type="GO" id="GO:0005737">
    <property type="term" value="C:cytoplasm"/>
    <property type="evidence" value="ECO:0007669"/>
    <property type="project" value="UniProtKB-SubCell"/>
</dbReference>
<dbReference type="GO" id="GO:0004414">
    <property type="term" value="F:homoserine O-acetyltransferase activity"/>
    <property type="evidence" value="ECO:0007669"/>
    <property type="project" value="UniProtKB-UniRule"/>
</dbReference>
<dbReference type="GO" id="GO:0008899">
    <property type="term" value="F:homoserine O-succinyltransferase activity"/>
    <property type="evidence" value="ECO:0007669"/>
    <property type="project" value="UniProtKB-EC"/>
</dbReference>
<dbReference type="GO" id="GO:0019281">
    <property type="term" value="P:L-methionine biosynthetic process from homoserine via O-succinyl-L-homoserine and cystathionine"/>
    <property type="evidence" value="ECO:0007669"/>
    <property type="project" value="InterPro"/>
</dbReference>
<dbReference type="CDD" id="cd03131">
    <property type="entry name" value="GATase1_HTS"/>
    <property type="match status" value="1"/>
</dbReference>
<dbReference type="FunFam" id="3.40.50.880:FF:000004">
    <property type="entry name" value="Homoserine O-succinyltransferase"/>
    <property type="match status" value="1"/>
</dbReference>
<dbReference type="Gene3D" id="3.40.50.880">
    <property type="match status" value="1"/>
</dbReference>
<dbReference type="HAMAP" id="MF_00295">
    <property type="entry name" value="MetA_acyltransf"/>
    <property type="match status" value="1"/>
</dbReference>
<dbReference type="InterPro" id="IPR029062">
    <property type="entry name" value="Class_I_gatase-like"/>
</dbReference>
<dbReference type="InterPro" id="IPR005697">
    <property type="entry name" value="HST_MetA"/>
</dbReference>
<dbReference type="InterPro" id="IPR033752">
    <property type="entry name" value="MetA_family"/>
</dbReference>
<dbReference type="NCBIfam" id="TIGR01001">
    <property type="entry name" value="metA"/>
    <property type="match status" value="1"/>
</dbReference>
<dbReference type="PANTHER" id="PTHR20919">
    <property type="entry name" value="HOMOSERINE O-SUCCINYLTRANSFERASE"/>
    <property type="match status" value="1"/>
</dbReference>
<dbReference type="PANTHER" id="PTHR20919:SF0">
    <property type="entry name" value="HOMOSERINE O-SUCCINYLTRANSFERASE"/>
    <property type="match status" value="1"/>
</dbReference>
<dbReference type="Pfam" id="PF04204">
    <property type="entry name" value="HTS"/>
    <property type="match status" value="1"/>
</dbReference>
<dbReference type="PIRSF" id="PIRSF000450">
    <property type="entry name" value="H_ser_succinyltr"/>
    <property type="match status" value="1"/>
</dbReference>
<dbReference type="SUPFAM" id="SSF52317">
    <property type="entry name" value="Class I glutamine amidotransferase-like"/>
    <property type="match status" value="1"/>
</dbReference>
<protein>
    <recommendedName>
        <fullName evidence="1">Homoserine O-succinyltransferase</fullName>
        <shortName evidence="1">HST</shortName>
        <ecNumber evidence="1">2.3.1.46</ecNumber>
    </recommendedName>
    <alternativeName>
        <fullName evidence="1">Homoserine transsuccinylase</fullName>
        <shortName evidence="1">HTS</shortName>
    </alternativeName>
</protein>
<organism>
    <name type="scientific">Shewanella loihica (strain ATCC BAA-1088 / PV-4)</name>
    <dbReference type="NCBI Taxonomy" id="323850"/>
    <lineage>
        <taxon>Bacteria</taxon>
        <taxon>Pseudomonadati</taxon>
        <taxon>Pseudomonadota</taxon>
        <taxon>Gammaproteobacteria</taxon>
        <taxon>Alteromonadales</taxon>
        <taxon>Shewanellaceae</taxon>
        <taxon>Shewanella</taxon>
    </lineage>
</organism>
<feature type="chain" id="PRO_1000021837" description="Homoserine O-succinyltransferase">
    <location>
        <begin position="1"/>
        <end position="321"/>
    </location>
</feature>
<feature type="active site" description="Acyl-thioester intermediate" evidence="1">
    <location>
        <position position="142"/>
    </location>
</feature>
<feature type="active site" description="Proton acceptor" evidence="1">
    <location>
        <position position="235"/>
    </location>
</feature>
<feature type="active site" evidence="1">
    <location>
        <position position="237"/>
    </location>
</feature>
<feature type="binding site" evidence="1">
    <location>
        <position position="163"/>
    </location>
    <ligand>
        <name>substrate</name>
    </ligand>
</feature>
<feature type="binding site" evidence="1">
    <location>
        <position position="192"/>
    </location>
    <ligand>
        <name>substrate</name>
    </ligand>
</feature>
<feature type="binding site" evidence="1">
    <location>
        <position position="249"/>
    </location>
    <ligand>
        <name>substrate</name>
    </ligand>
</feature>
<feature type="site" description="Important for acyl-CoA specificity" evidence="1">
    <location>
        <position position="111"/>
    </location>
</feature>
<feature type="site" description="Important for substrate specificity" evidence="1">
    <location>
        <position position="192"/>
    </location>
</feature>
<accession>A3QG19</accession>
<reference key="1">
    <citation type="submission" date="2007-03" db="EMBL/GenBank/DDBJ databases">
        <title>Complete sequence of Shewanella loihica PV-4.</title>
        <authorList>
            <consortium name="US DOE Joint Genome Institute"/>
            <person name="Copeland A."/>
            <person name="Lucas S."/>
            <person name="Lapidus A."/>
            <person name="Barry K."/>
            <person name="Detter J.C."/>
            <person name="Glavina del Rio T."/>
            <person name="Hammon N."/>
            <person name="Israni S."/>
            <person name="Dalin E."/>
            <person name="Tice H."/>
            <person name="Pitluck S."/>
            <person name="Chain P."/>
            <person name="Malfatti S."/>
            <person name="Shin M."/>
            <person name="Vergez L."/>
            <person name="Schmutz J."/>
            <person name="Larimer F."/>
            <person name="Land M."/>
            <person name="Hauser L."/>
            <person name="Kyrpides N."/>
            <person name="Mikhailova N."/>
            <person name="Romine M.F."/>
            <person name="Serres G."/>
            <person name="Fredrickson J."/>
            <person name="Tiedje J."/>
            <person name="Richardson P."/>
        </authorList>
    </citation>
    <scope>NUCLEOTIDE SEQUENCE [LARGE SCALE GENOMIC DNA]</scope>
    <source>
        <strain>ATCC BAA-1088 / PV-4</strain>
    </source>
</reference>
<evidence type="ECO:0000255" key="1">
    <source>
        <dbReference type="HAMAP-Rule" id="MF_00295"/>
    </source>
</evidence>
<name>METAS_SHELP</name>
<sequence>MPVKIPDNLPAAEILESENIFVMSETRAANQDIRPMKVLILNLMPNKIETETQLLRLLGNTPLQVDVDLLRIHDKVSKHTSIDHMNNFYRDFEAVRHKNYDGLIITGAPLGQIEFEEVTYWDHIREIIDWSQHHVTSVLFLCWAAHAALYHLYGLQRKLLSAKRSGVFNHQRTHKHFPLLRGFDDEFFAPHSRFAEMEVADLKAHKELQVLAESDEAGAYLVLSRNNRNLFVMGHPEYQKSTLKDEYQRDLAEGLNPRVPKNYFRGDDPSQAPVARWHGHGSLLVSNWLNYYVYQLTPYDLHDMSAITPWEHEYKDAEDND</sequence>
<keyword id="KW-0012">Acyltransferase</keyword>
<keyword id="KW-0028">Amino-acid biosynthesis</keyword>
<keyword id="KW-0963">Cytoplasm</keyword>
<keyword id="KW-0486">Methionine biosynthesis</keyword>
<keyword id="KW-1185">Reference proteome</keyword>
<keyword id="KW-0808">Transferase</keyword>
<gene>
    <name evidence="1" type="primary">metAS</name>
    <name type="ordered locus">Shew_2551</name>
</gene>
<comment type="function">
    <text evidence="1">Transfers a succinyl group from succinyl-CoA to L-homoserine, forming succinyl-L-homoserine.</text>
</comment>
<comment type="catalytic activity">
    <reaction evidence="1">
        <text>L-homoserine + succinyl-CoA = O-succinyl-L-homoserine + CoA</text>
        <dbReference type="Rhea" id="RHEA:22008"/>
        <dbReference type="ChEBI" id="CHEBI:57287"/>
        <dbReference type="ChEBI" id="CHEBI:57292"/>
        <dbReference type="ChEBI" id="CHEBI:57476"/>
        <dbReference type="ChEBI" id="CHEBI:57661"/>
        <dbReference type="EC" id="2.3.1.46"/>
    </reaction>
</comment>
<comment type="pathway">
    <text evidence="1">Amino-acid biosynthesis; L-methionine biosynthesis via de novo pathway; O-succinyl-L-homoserine from L-homoserine: step 1/1.</text>
</comment>
<comment type="subcellular location">
    <subcellularLocation>
        <location evidence="1">Cytoplasm</location>
    </subcellularLocation>
</comment>
<comment type="similarity">
    <text evidence="1">Belongs to the MetA family.</text>
</comment>
<proteinExistence type="inferred from homology"/>